<gene>
    <name evidence="4" type="primary">mfn-1</name>
    <name evidence="4" type="ORF">CBG02884</name>
</gene>
<evidence type="ECO:0000250" key="1">
    <source>
        <dbReference type="UniProtKB" id="Q9VAY3"/>
    </source>
</evidence>
<evidence type="ECO:0000255" key="2"/>
<evidence type="ECO:0000305" key="3"/>
<evidence type="ECO:0000312" key="4">
    <source>
        <dbReference type="WormBase" id="CBG02884a"/>
    </source>
</evidence>
<sequence length="311" mass="34088">MGGGGEDEYESLPTHSIPVHLAAGALAGAVEHCVMFPFDSVKTRMQSLCPCETKCPTPVHSLMSIVKREGWLRPLRGVNAVAAGSMPAHALYFTVYEKMKSFLTGNTAGHEHTLAYGASGVVATLIHDAVMNPAEVVKQRMQMAYSPYGSSLECARCVYNREGFAAFYRSYTTQLAMNVPFQAIHFMGYEFWQQVLNPEHKYDPKSHLIAGGLAGGLAAAVTTPMDCVKTVLNTQQAAEADPSNRRIFLKARYRYRGISDAVRTIYSQRGMAGFSCGLQARVIFQVPATALSWSVYELFKFMLSFEGGHSS</sequence>
<proteinExistence type="inferred from homology"/>
<comment type="function">
    <text evidence="1">Mitochondrial iron transporter that mediates iron uptake. Probably required for heme synthesis of hemoproteins and Fe-S cluster assembly.</text>
</comment>
<comment type="subcellular location">
    <subcellularLocation>
        <location evidence="1">Mitochondrion inner membrane</location>
        <topology evidence="1">Multi-pass membrane protein</topology>
    </subcellularLocation>
</comment>
<comment type="similarity">
    <text evidence="3">Belongs to the mitochondrial carrier (TC 2.A.29) family.</text>
</comment>
<dbReference type="EMBL" id="HE601438">
    <property type="protein sequence ID" value="CAP23717.3"/>
    <property type="molecule type" value="Genomic_DNA"/>
</dbReference>
<dbReference type="RefSeq" id="XP_002631109.1">
    <property type="nucleotide sequence ID" value="XM_002631063.1"/>
</dbReference>
<dbReference type="SMR" id="Q620A6"/>
<dbReference type="FunCoup" id="Q620A6">
    <property type="interactions" value="2823"/>
</dbReference>
<dbReference type="STRING" id="6238.Q620A6"/>
<dbReference type="EnsemblMetazoa" id="CBG02884a.1">
    <property type="protein sequence ID" value="CBG02884a.1"/>
    <property type="gene ID" value="WBGene00025852"/>
</dbReference>
<dbReference type="GeneID" id="8572623"/>
<dbReference type="KEGG" id="cbr:CBG_02884"/>
<dbReference type="CTD" id="8572623"/>
<dbReference type="WormBase" id="CBG02884a">
    <property type="protein sequence ID" value="CBP00872"/>
    <property type="gene ID" value="WBGene00025852"/>
    <property type="gene designation" value="Cbr-mfn-1"/>
</dbReference>
<dbReference type="eggNOG" id="KOG0760">
    <property type="taxonomic scope" value="Eukaryota"/>
</dbReference>
<dbReference type="HOGENOM" id="CLU_015166_3_1_1"/>
<dbReference type="InParanoid" id="Q620A6"/>
<dbReference type="OMA" id="AYECSKE"/>
<dbReference type="Proteomes" id="UP000008549">
    <property type="component" value="Unassembled WGS sequence"/>
</dbReference>
<dbReference type="GO" id="GO:0005743">
    <property type="term" value="C:mitochondrial inner membrane"/>
    <property type="evidence" value="ECO:0007669"/>
    <property type="project" value="UniProtKB-SubCell"/>
</dbReference>
<dbReference type="GO" id="GO:0031966">
    <property type="term" value="C:mitochondrial membrane"/>
    <property type="evidence" value="ECO:0000318"/>
    <property type="project" value="GO_Central"/>
</dbReference>
<dbReference type="GO" id="GO:0015093">
    <property type="term" value="F:ferrous iron transmembrane transporter activity"/>
    <property type="evidence" value="ECO:0000318"/>
    <property type="project" value="GO_Central"/>
</dbReference>
<dbReference type="GO" id="GO:0048250">
    <property type="term" value="P:iron import into the mitochondrion"/>
    <property type="evidence" value="ECO:0000318"/>
    <property type="project" value="GO_Central"/>
</dbReference>
<dbReference type="FunFam" id="1.50.40.10:FF:000127">
    <property type="entry name" value="MC family mitochondrial carrier protein"/>
    <property type="match status" value="1"/>
</dbReference>
<dbReference type="FunFam" id="1.50.40.10:FF:000054">
    <property type="entry name" value="Mitochondrial carrier"/>
    <property type="match status" value="1"/>
</dbReference>
<dbReference type="Gene3D" id="1.50.40.10">
    <property type="entry name" value="Mitochondrial carrier domain"/>
    <property type="match status" value="2"/>
</dbReference>
<dbReference type="InterPro" id="IPR018108">
    <property type="entry name" value="Mitochondrial_sb/sol_carrier"/>
</dbReference>
<dbReference type="InterPro" id="IPR023395">
    <property type="entry name" value="Mt_carrier_dom_sf"/>
</dbReference>
<dbReference type="PANTHER" id="PTHR45758">
    <property type="entry name" value="MITOFERRIN-1-RELATED"/>
    <property type="match status" value="1"/>
</dbReference>
<dbReference type="PANTHER" id="PTHR45758:SF20">
    <property type="entry name" value="MITOFERRIN-2"/>
    <property type="match status" value="1"/>
</dbReference>
<dbReference type="Pfam" id="PF00153">
    <property type="entry name" value="Mito_carr"/>
    <property type="match status" value="3"/>
</dbReference>
<dbReference type="SUPFAM" id="SSF103506">
    <property type="entry name" value="Mitochondrial carrier"/>
    <property type="match status" value="1"/>
</dbReference>
<dbReference type="PROSITE" id="PS50920">
    <property type="entry name" value="SOLCAR"/>
    <property type="match status" value="3"/>
</dbReference>
<name>MFRN_CAEBR</name>
<accession>Q620A6</accession>
<accession>A8WTA6</accession>
<protein>
    <recommendedName>
        <fullName>Mitoferrin</fullName>
    </recommendedName>
</protein>
<organism>
    <name type="scientific">Caenorhabditis briggsae</name>
    <dbReference type="NCBI Taxonomy" id="6238"/>
    <lineage>
        <taxon>Eukaryota</taxon>
        <taxon>Metazoa</taxon>
        <taxon>Ecdysozoa</taxon>
        <taxon>Nematoda</taxon>
        <taxon>Chromadorea</taxon>
        <taxon>Rhabditida</taxon>
        <taxon>Rhabditina</taxon>
        <taxon>Rhabditomorpha</taxon>
        <taxon>Rhabditoidea</taxon>
        <taxon>Rhabditidae</taxon>
        <taxon>Peloderinae</taxon>
        <taxon>Caenorhabditis</taxon>
    </lineage>
</organism>
<keyword id="KW-0406">Ion transport</keyword>
<keyword id="KW-0408">Iron</keyword>
<keyword id="KW-0410">Iron transport</keyword>
<keyword id="KW-0472">Membrane</keyword>
<keyword id="KW-0496">Mitochondrion</keyword>
<keyword id="KW-0999">Mitochondrion inner membrane</keyword>
<keyword id="KW-1185">Reference proteome</keyword>
<keyword id="KW-0677">Repeat</keyword>
<keyword id="KW-0812">Transmembrane</keyword>
<keyword id="KW-1133">Transmembrane helix</keyword>
<keyword id="KW-0813">Transport</keyword>
<feature type="chain" id="PRO_0000235260" description="Mitoferrin">
    <location>
        <begin position="1"/>
        <end position="311"/>
    </location>
</feature>
<feature type="transmembrane region" description="Helical; Name=1" evidence="2">
    <location>
        <begin position="17"/>
        <end position="36"/>
    </location>
</feature>
<feature type="transmembrane region" description="Helical; Name=2" evidence="2">
    <location>
        <begin position="77"/>
        <end position="96"/>
    </location>
</feature>
<feature type="transmembrane region" description="Helical; Name=3" evidence="2">
    <location>
        <begin position="112"/>
        <end position="132"/>
    </location>
</feature>
<feature type="transmembrane region" description="Helical; Name=4" evidence="2">
    <location>
        <begin position="170"/>
        <end position="189"/>
    </location>
</feature>
<feature type="transmembrane region" description="Helical; Name=5" evidence="2">
    <location>
        <begin position="204"/>
        <end position="223"/>
    </location>
</feature>
<feature type="transmembrane region" description="Helical; Name=6" evidence="2">
    <location>
        <begin position="277"/>
        <end position="296"/>
    </location>
</feature>
<feature type="repeat" description="Solcar 1">
    <location>
        <begin position="15"/>
        <end position="102"/>
    </location>
</feature>
<feature type="repeat" description="Solcar 2">
    <location>
        <begin position="111"/>
        <end position="195"/>
    </location>
</feature>
<feature type="repeat" description="Solcar 3">
    <location>
        <begin position="202"/>
        <end position="302"/>
    </location>
</feature>
<reference key="1">
    <citation type="journal article" date="2003" name="PLoS Biol.">
        <title>The genome sequence of Caenorhabditis briggsae: a platform for comparative genomics.</title>
        <authorList>
            <person name="Stein L.D."/>
            <person name="Bao Z."/>
            <person name="Blasiar D."/>
            <person name="Blumenthal T."/>
            <person name="Brent M.R."/>
            <person name="Chen N."/>
            <person name="Chinwalla A."/>
            <person name="Clarke L."/>
            <person name="Clee C."/>
            <person name="Coghlan A."/>
            <person name="Coulson A."/>
            <person name="D'Eustachio P."/>
            <person name="Fitch D.H.A."/>
            <person name="Fulton L.A."/>
            <person name="Fulton R.E."/>
            <person name="Griffiths-Jones S."/>
            <person name="Harris T.W."/>
            <person name="Hillier L.W."/>
            <person name="Kamath R."/>
            <person name="Kuwabara P.E."/>
            <person name="Mardis E.R."/>
            <person name="Marra M.A."/>
            <person name="Miner T.L."/>
            <person name="Minx P."/>
            <person name="Mullikin J.C."/>
            <person name="Plumb R.W."/>
            <person name="Rogers J."/>
            <person name="Schein J.E."/>
            <person name="Sohrmann M."/>
            <person name="Spieth J."/>
            <person name="Stajich J.E."/>
            <person name="Wei C."/>
            <person name="Willey D."/>
            <person name="Wilson R.K."/>
            <person name="Durbin R.M."/>
            <person name="Waterston R.H."/>
        </authorList>
    </citation>
    <scope>NUCLEOTIDE SEQUENCE [LARGE SCALE GENOMIC DNA]</scope>
    <source>
        <strain>AF16</strain>
    </source>
</reference>